<dbReference type="EMBL" id="U06746">
    <property type="protein sequence ID" value="AAA85517.1"/>
    <property type="molecule type" value="mRNA"/>
</dbReference>
<dbReference type="EMBL" id="U06748">
    <property type="protein sequence ID" value="AAA85519.1"/>
    <property type="molecule type" value="mRNA"/>
</dbReference>
<dbReference type="EMBL" id="U06750">
    <property type="protein sequence ID" value="AAA85521.1"/>
    <property type="molecule type" value="mRNA"/>
</dbReference>
<dbReference type="EMBL" id="U06752">
    <property type="protein sequence ID" value="AAA85523.1"/>
    <property type="molecule type" value="mRNA"/>
</dbReference>
<dbReference type="EMBL" id="AF240632">
    <property type="protein sequence ID" value="AAF86958.1"/>
    <property type="molecule type" value="Genomic_DNA"/>
</dbReference>
<dbReference type="PIR" id="A43353">
    <property type="entry name" value="A43353"/>
</dbReference>
<dbReference type="PIR" id="A53577">
    <property type="entry name" value="A53577"/>
</dbReference>
<dbReference type="GlyCosmos" id="Q63661">
    <property type="glycosylation" value="27 sites, No reported glycans"/>
</dbReference>
<dbReference type="GlyGen" id="Q63661">
    <property type="glycosylation" value="31 sites"/>
</dbReference>
<dbReference type="PhosphoSitePlus" id="Q63661"/>
<dbReference type="UCSC" id="RGD:621331">
    <property type="organism name" value="rat"/>
</dbReference>
<dbReference type="AGR" id="RGD:621331"/>
<dbReference type="RGD" id="621331">
    <property type="gene designation" value="Muc4"/>
</dbReference>
<dbReference type="InParanoid" id="Q63661"/>
<dbReference type="Reactome" id="R-RNO-913709">
    <property type="pathway name" value="O-linked glycosylation of mucins"/>
</dbReference>
<dbReference type="Reactome" id="R-RNO-977068">
    <property type="pathway name" value="Termination of O-glycan biosynthesis"/>
</dbReference>
<dbReference type="PRO" id="PR:Q63661"/>
<dbReference type="Proteomes" id="UP000002494">
    <property type="component" value="Unplaced"/>
</dbReference>
<dbReference type="GO" id="GO:0016324">
    <property type="term" value="C:apical plasma membrane"/>
    <property type="evidence" value="ECO:0000314"/>
    <property type="project" value="RGD"/>
</dbReference>
<dbReference type="GO" id="GO:0005615">
    <property type="term" value="C:extracellular space"/>
    <property type="evidence" value="ECO:0000314"/>
    <property type="project" value="RGD"/>
</dbReference>
<dbReference type="GO" id="GO:0031528">
    <property type="term" value="C:microvillus membrane"/>
    <property type="evidence" value="ECO:0000314"/>
    <property type="project" value="RGD"/>
</dbReference>
<dbReference type="GO" id="GO:0032991">
    <property type="term" value="C:protein-containing complex"/>
    <property type="evidence" value="ECO:0000314"/>
    <property type="project" value="RGD"/>
</dbReference>
<dbReference type="GO" id="GO:0005176">
    <property type="term" value="F:ErbB-2 class receptor binding"/>
    <property type="evidence" value="ECO:0000353"/>
    <property type="project" value="RGD"/>
</dbReference>
<dbReference type="GO" id="GO:0044877">
    <property type="term" value="F:protein-containing complex binding"/>
    <property type="evidence" value="ECO:0000314"/>
    <property type="project" value="RGD"/>
</dbReference>
<dbReference type="GO" id="GO:0007160">
    <property type="term" value="P:cell-matrix adhesion"/>
    <property type="evidence" value="ECO:0007669"/>
    <property type="project" value="InterPro"/>
</dbReference>
<dbReference type="GO" id="GO:0032869">
    <property type="term" value="P:cellular response to insulin stimulus"/>
    <property type="evidence" value="ECO:0000270"/>
    <property type="project" value="RGD"/>
</dbReference>
<dbReference type="GO" id="GO:0071560">
    <property type="term" value="P:cellular response to transforming growth factor beta stimulus"/>
    <property type="evidence" value="ECO:0000270"/>
    <property type="project" value="RGD"/>
</dbReference>
<dbReference type="GO" id="GO:0048565">
    <property type="term" value="P:digestive tract development"/>
    <property type="evidence" value="ECO:0000270"/>
    <property type="project" value="RGD"/>
</dbReference>
<dbReference type="GO" id="GO:0044849">
    <property type="term" value="P:estrous cycle"/>
    <property type="evidence" value="ECO:0000270"/>
    <property type="project" value="RGD"/>
</dbReference>
<dbReference type="GO" id="GO:0002244">
    <property type="term" value="P:hematopoietic progenitor cell differentiation"/>
    <property type="evidence" value="ECO:0000266"/>
    <property type="project" value="RGD"/>
</dbReference>
<dbReference type="GO" id="GO:0007595">
    <property type="term" value="P:lactation"/>
    <property type="evidence" value="ECO:0000270"/>
    <property type="project" value="RGD"/>
</dbReference>
<dbReference type="GO" id="GO:0030277">
    <property type="term" value="P:maintenance of gastrointestinal epithelium"/>
    <property type="evidence" value="ECO:0000266"/>
    <property type="project" value="RGD"/>
</dbReference>
<dbReference type="GO" id="GO:0030879">
    <property type="term" value="P:mammary gland development"/>
    <property type="evidence" value="ECO:0000270"/>
    <property type="project" value="RGD"/>
</dbReference>
<dbReference type="GO" id="GO:0043066">
    <property type="term" value="P:negative regulation of apoptotic process"/>
    <property type="evidence" value="ECO:0000314"/>
    <property type="project" value="RGD"/>
</dbReference>
<dbReference type="GO" id="GO:0022408">
    <property type="term" value="P:negative regulation of cell-cell adhesion"/>
    <property type="evidence" value="ECO:0000314"/>
    <property type="project" value="RGD"/>
</dbReference>
<dbReference type="GO" id="GO:0001953">
    <property type="term" value="P:negative regulation of cell-matrix adhesion"/>
    <property type="evidence" value="ECO:0000314"/>
    <property type="project" value="RGD"/>
</dbReference>
<dbReference type="GO" id="GO:0002853">
    <property type="term" value="P:negative regulation of T cell mediated cytotoxicity directed against tumor cell target"/>
    <property type="evidence" value="ECO:0000314"/>
    <property type="project" value="RGD"/>
</dbReference>
<dbReference type="GO" id="GO:0031077">
    <property type="term" value="P:post-embryonic camera-type eye development"/>
    <property type="evidence" value="ECO:0000270"/>
    <property type="project" value="RGD"/>
</dbReference>
<dbReference type="GO" id="GO:0034097">
    <property type="term" value="P:response to cytokine"/>
    <property type="evidence" value="ECO:0000270"/>
    <property type="project" value="RGD"/>
</dbReference>
<dbReference type="GO" id="GO:0032355">
    <property type="term" value="P:response to estradiol"/>
    <property type="evidence" value="ECO:0000270"/>
    <property type="project" value="RGD"/>
</dbReference>
<dbReference type="GO" id="GO:0009725">
    <property type="term" value="P:response to hormone"/>
    <property type="evidence" value="ECO:0000270"/>
    <property type="project" value="RGD"/>
</dbReference>
<dbReference type="GO" id="GO:0032570">
    <property type="term" value="P:response to progesterone"/>
    <property type="evidence" value="ECO:0000270"/>
    <property type="project" value="RGD"/>
</dbReference>
<dbReference type="GO" id="GO:0033189">
    <property type="term" value="P:response to vitamin A"/>
    <property type="evidence" value="ECO:0000270"/>
    <property type="project" value="RGD"/>
</dbReference>
<dbReference type="GO" id="GO:0009410">
    <property type="term" value="P:response to xenobiotic stimulus"/>
    <property type="evidence" value="ECO:0000270"/>
    <property type="project" value="RGD"/>
</dbReference>
<dbReference type="CDD" id="cd00053">
    <property type="entry name" value="EGF"/>
    <property type="match status" value="1"/>
</dbReference>
<dbReference type="InterPro" id="IPR056619">
    <property type="entry name" value="C8-3_MUC4"/>
</dbReference>
<dbReference type="InterPro" id="IPR000742">
    <property type="entry name" value="EGF-like_dom"/>
</dbReference>
<dbReference type="InterPro" id="IPR051495">
    <property type="entry name" value="Epithelial_Barrier/Signaling"/>
</dbReference>
<dbReference type="InterPro" id="IPR003886">
    <property type="entry name" value="NIDO_dom"/>
</dbReference>
<dbReference type="InterPro" id="IPR001846">
    <property type="entry name" value="VWF_type-D"/>
</dbReference>
<dbReference type="PANTHER" id="PTHR13802">
    <property type="entry name" value="MUCIN 4-RELATED"/>
    <property type="match status" value="1"/>
</dbReference>
<dbReference type="PANTHER" id="PTHR13802:SF52">
    <property type="entry name" value="MUCIN-4"/>
    <property type="match status" value="1"/>
</dbReference>
<dbReference type="Pfam" id="PF23263">
    <property type="entry name" value="C8-3_MUC4"/>
    <property type="match status" value="1"/>
</dbReference>
<dbReference type="Pfam" id="PF06119">
    <property type="entry name" value="NIDO"/>
    <property type="match status" value="1"/>
</dbReference>
<dbReference type="Pfam" id="PF00094">
    <property type="entry name" value="VWD"/>
    <property type="match status" value="1"/>
</dbReference>
<dbReference type="SMART" id="SM00181">
    <property type="entry name" value="EGF"/>
    <property type="match status" value="3"/>
</dbReference>
<dbReference type="SMART" id="SM00539">
    <property type="entry name" value="NIDO"/>
    <property type="match status" value="1"/>
</dbReference>
<dbReference type="SMART" id="SM00216">
    <property type="entry name" value="VWD"/>
    <property type="match status" value="1"/>
</dbReference>
<dbReference type="PROSITE" id="PS00022">
    <property type="entry name" value="EGF_1"/>
    <property type="match status" value="2"/>
</dbReference>
<dbReference type="PROSITE" id="PS50026">
    <property type="entry name" value="EGF_3"/>
    <property type="match status" value="2"/>
</dbReference>
<dbReference type="PROSITE" id="PS51220">
    <property type="entry name" value="NIDO"/>
    <property type="match status" value="1"/>
</dbReference>
<dbReference type="PROSITE" id="PS51233">
    <property type="entry name" value="VWFD"/>
    <property type="match status" value="1"/>
</dbReference>
<protein>
    <recommendedName>
        <fullName>Mucin-4</fullName>
        <shortName>MUC-4</shortName>
    </recommendedName>
    <alternativeName>
        <fullName>Ascites sialoglycoprotein</fullName>
        <shortName>ASGP</shortName>
    </alternativeName>
    <alternativeName>
        <fullName>Pancreatic adenocarcinoma mucin</fullName>
    </alternativeName>
    <alternativeName>
        <fullName>Pre-sialomucin complex</fullName>
        <shortName>pSMC</shortName>
    </alternativeName>
    <alternativeName>
        <fullName>Sialomucin complex</fullName>
    </alternativeName>
    <alternativeName>
        <fullName>Testis mucin</fullName>
    </alternativeName>
    <component>
        <recommendedName>
            <fullName>Mucin-4 alpha chain</fullName>
        </recommendedName>
        <alternativeName>
            <fullName>Ascites sialoglycoprotein 1</fullName>
            <shortName>ASGP-1</shortName>
        </alternativeName>
    </component>
    <component>
        <recommendedName>
            <fullName>Mucin-4 beta chain</fullName>
        </recommendedName>
        <alternativeName>
            <fullName>Ascites sialoglycoprotein 2</fullName>
            <shortName>ASGP-2</shortName>
        </alternativeName>
    </component>
</protein>
<keyword id="KW-0130">Cell adhesion</keyword>
<keyword id="KW-1003">Cell membrane</keyword>
<keyword id="KW-1015">Disulfide bond</keyword>
<keyword id="KW-0245">EGF-like domain</keyword>
<keyword id="KW-0325">Glycoprotein</keyword>
<keyword id="KW-0472">Membrane</keyword>
<keyword id="KW-1185">Reference proteome</keyword>
<keyword id="KW-0677">Repeat</keyword>
<keyword id="KW-0964">Secreted</keyword>
<keyword id="KW-0732">Signal</keyword>
<keyword id="KW-0812">Transmembrane</keyword>
<keyword id="KW-1133">Transmembrane helix</keyword>
<evidence type="ECO:0000250" key="1">
    <source>
        <dbReference type="UniProtKB" id="Q99102"/>
    </source>
</evidence>
<evidence type="ECO:0000255" key="2"/>
<evidence type="ECO:0000255" key="3">
    <source>
        <dbReference type="PROSITE-ProRule" id="PRU00076"/>
    </source>
</evidence>
<evidence type="ECO:0000255" key="4">
    <source>
        <dbReference type="PROSITE-ProRule" id="PRU00570"/>
    </source>
</evidence>
<evidence type="ECO:0000255" key="5">
    <source>
        <dbReference type="PROSITE-ProRule" id="PRU00580"/>
    </source>
</evidence>
<evidence type="ECO:0000256" key="6">
    <source>
        <dbReference type="SAM" id="MobiDB-lite"/>
    </source>
</evidence>
<evidence type="ECO:0000269" key="7">
    <source>
    </source>
</evidence>
<evidence type="ECO:0000269" key="8">
    <source>
    </source>
</evidence>
<evidence type="ECO:0000269" key="9">
    <source>
    </source>
</evidence>
<evidence type="ECO:0000269" key="10">
    <source>
    </source>
</evidence>
<evidence type="ECO:0000305" key="11"/>
<evidence type="ECO:0000305" key="12">
    <source>
    </source>
</evidence>
<gene>
    <name type="primary">Muc4</name>
    <name type="synonym">Smc</name>
</gene>
<organism>
    <name type="scientific">Rattus norvegicus</name>
    <name type="common">Rat</name>
    <dbReference type="NCBI Taxonomy" id="10116"/>
    <lineage>
        <taxon>Eukaryota</taxon>
        <taxon>Metazoa</taxon>
        <taxon>Chordata</taxon>
        <taxon>Craniata</taxon>
        <taxon>Vertebrata</taxon>
        <taxon>Euteleostomi</taxon>
        <taxon>Mammalia</taxon>
        <taxon>Eutheria</taxon>
        <taxon>Euarchontoglires</taxon>
        <taxon>Glires</taxon>
        <taxon>Rodentia</taxon>
        <taxon>Myomorpha</taxon>
        <taxon>Muroidea</taxon>
        <taxon>Muridae</taxon>
        <taxon>Murinae</taxon>
        <taxon>Rattus</taxon>
    </lineage>
</organism>
<reference key="1">
    <citation type="journal article" date="1994" name="J. Biol. Chem.">
        <title>Molecular cloning and sequencing of the mucin subunit of a heterodimeric, bifunctional cell surface glycoprotein complex of ascites rat mammary adenocarcinoma cells.</title>
        <authorList>
            <person name="Wu K."/>
            <person name="Fregien N."/>
            <person name="Carraway K.L."/>
        </authorList>
    </citation>
    <scope>NUCLEOTIDE SEQUENCE [MRNA]</scope>
    <source>
        <strain>Fischer 344</strain>
    </source>
</reference>
<reference key="2">
    <citation type="journal article" date="2000" name="Biochem. J.">
        <title>Cloning and characterization of the 5' flanking region of the sialomucin complex/rat Muc4 gene: promoter activity in cultured cells.</title>
        <authorList>
            <person name="Price-Schiavi S.A."/>
            <person name="Perez A."/>
            <person name="Barco R."/>
            <person name="Carraway K.L."/>
        </authorList>
    </citation>
    <scope>NUCLEOTIDE SEQUENCE [MRNA] OF 1-30</scope>
</reference>
<reference key="3">
    <citation type="journal article" date="1992" name="J. Biol. Chem.">
        <title>Molecular cloning of the transmembrane component of the 13762 mammary adenocarcinoma sialomucin complex. A new member of the epidermal growth factor superfamily.</title>
        <authorList>
            <person name="Sheng Z."/>
            <person name="Wu K."/>
            <person name="Carraway K.L."/>
            <person name="Fregien N."/>
        </authorList>
    </citation>
    <scope>NUCLEOTIDE SEQUENCE [MRNA] OF 1601-2344</scope>
    <scope>GLYCOSYLATION</scope>
    <source>
        <strain>Fischer 344</strain>
    </source>
</reference>
<reference key="4">
    <citation type="journal article" date="1980" name="J. Biol. Chem.">
        <title>A complex of two cell surface glycoproteins from ascites mammary adenocarcinoma cells.</title>
        <authorList>
            <person name="Sherblom A.P."/>
            <person name="Carraway K.L."/>
        </authorList>
    </citation>
    <scope>SUBUNIT</scope>
    <scope>SUBCELLULAR LOCATION</scope>
    <scope>TOPOLOGY</scope>
    <scope>PROTEOLYTIC CLEAVAGE</scope>
</reference>
<reference key="5">
    <citation type="journal article" date="1998" name="J. Biol. Chem.">
        <title>Post-transcriptional regulation of a milk membrane protein, the sialomucin complex (Ascites sialoglycoprotein (ASGP)-1/ASGP-2, rat muc4), by transforming growth factor beta.</title>
        <authorList>
            <person name="Price-Schiavi S.A."/>
            <person name="Carraway C.A."/>
            <person name="Fregien N."/>
            <person name="Carraway K.L."/>
        </authorList>
    </citation>
    <scope>POST-TRANSCRIPTIONAL REGULATION</scope>
</reference>
<reference key="6">
    <citation type="journal article" date="2002" name="Oncogene">
        <title>Muc4/sialomucin complex, the intramembrane ErbB2 ligand, induces specific phosphorylation of ErbB2 and enhances expression of p27(kip), but does not activate mitogen-activated kinase or protein kinaseB/Akt pathways.</title>
        <authorList>
            <person name="Jepson S."/>
            <person name="Komatsu M."/>
            <person name="Haq B."/>
            <person name="Arango M.E."/>
            <person name="Huang D."/>
            <person name="Carraway C.A."/>
            <person name="Carraway K.L."/>
        </authorList>
    </citation>
    <scope>INTERACTION WITH ERBB2; ERBB3 AND NRG1</scope>
    <scope>PHOSPHORYLATION OF ERBB2</scope>
</reference>
<reference key="7">
    <citation type="journal article" date="2005" name="J. Cell. Physiol.">
        <title>Presence of MUC4 in human milk and at the luminal surfaces of blood vessels.</title>
        <authorList>
            <person name="Zhang J."/>
            <person name="Perez A."/>
            <person name="Yasin M."/>
            <person name="Soto P."/>
            <person name="Rong M."/>
            <person name="Theodoropoulos G."/>
            <person name="Carothers Carraway C.A."/>
            <person name="Carraway K.L."/>
        </authorList>
    </citation>
    <scope>SUBCELLULAR LOCATION</scope>
</reference>
<reference key="8">
    <citation type="journal article" date="2006" name="Mol. Biol. Cell">
        <title>Muc4-ErbB2 complex formation and signaling in polarized Caco-2 epithelial cells indicate that Muc4 acts as an unorthodox ligand for ErbB2.</title>
        <authorList>
            <person name="Ramsauer V.P."/>
            <person name="Pino V."/>
            <person name="Farooq A."/>
            <person name="Carothers Carraway C.A."/>
            <person name="Salas P.J."/>
            <person name="Carraway K.L."/>
        </authorList>
    </citation>
    <scope>INTERACTION WITH ERBB2 AND ERBB3</scope>
</reference>
<accession>Q63661</accession>
<accession>Q63655</accession>
<accession>Q63657</accession>
<accession>Q63659</accession>
<accession>Q9JIC4</accession>
<sequence length="2344" mass="248041">MRGPHGVSWRVPWLCLSCLCSCLLLLPVNTSTTSAPKTSTALPSSTNPSQMTSQVSNPTASSYRMTKNTGQASPMVTSSSITTLPQSQHTGSMKTTRNPQTTGTTEVTTTLSASSSDQVQVETTSQTTLSPDTTTTSHAPRESSSPPSTSVILTTTASTEGTSGDTGHTMAVTTQGSTPATTEISVTPSTQKMSPVSTFSTSTQEITTLSQSQHTGGMKTTRNPQTTGTTEVTTTLSASSSDHPTSSPESTPGNTAPRTTETSTTTTTKVLMTSLQQKLPTGSTLGTSTQELTTLPQSQHTGIMKTTSRTQTTTPTEVTTRTLSASSSDHRQAETSSQTTLSPDTTTTSHAPRESSPPSTSVILTHGHREGTSGDTGHTMAVTTQGSTPATTEISVTPSTQKMSPVSTFSTSTQEITTLSQSQHTGGMKTTRNPQRTTPTEVTTSTLSASSSDQVQVETTSRATLSPDTTTTSHAPSVSSSSPSPPSTEGTSVDTGLTTAVTTQDSTPATTQGSLTSSSQTLSTVSPLSTSTQETSTQELTSSQSQHTGSMKTTHNPQTTRNTEVTTTLSASSSDQVQVETTSQTTLSDATTTSHAPRESSSPPSTSDILTTMASTEGTSGDTGHTMAVTTQGSTPATTEISVTPSTQKMSPVSTFSTSTQEITTLSQSQHTGGMKTTRNPQTTGTTEVTTTLSASSSDQVQAETSSQTTLSPDTTTTSHAPRESSSPPSTSDMLTTTASTEGTSGDTGHTTAVTTQGSIPATTQLSTTFASQKMSTVSTPTTSSIQELSTLPQSQHTGSMEISSRPQTTSVTSTLSSSPSGSTPVQTRSVTSSSDERTNPTSSGVSNTSPATTEVLTPTSSPESTPGNTAPRTTETSTTTTTKVLMTSLQQKLPTGSTLGTSTPTEVTTTLSASSSDQVQVETTSQTTLSPDATTTSHAPRESSSPPSTSVILTTMASTEGTSGDTGHTTAVTDQGSTPATTEISVTPSTQKMSTVSTLVTSTQELTSSQSQRTGSMGTSSKPQATTPTEVTTSTLSSFSRGSLFSARNCCLQTKKPPLPAVVCLPDPSSVPSLMHSSKPQATTPTEVTTSTLSSFSRGSTQTQTVSWETSSSGKITAPSTSSRRTPSVATSDIFTTTDSTSGNAGHTLLTGSHSVITSRVASTTLGRLSTVAHRQSTQRSSTHSQSYLTESMGASSTSETSLLTEATTETSLCLFTWTHCDRDLLSWTSSSGLTTKTDNDRSTALSATSLTLPAPSTSTASRSTVPPAPLPPDQGISLFQIGFPLGSLCGIPSILQITVRSFSPSQTTMSSPTPTHLKEASQEGSVCHSGHSGVMLISLAPGEPYFRTTTSHFTMSSTSLIRKVESLINEFTSDWSFKPSDTEVTWVNVPAYPAQGRTLGANTYQAILSTDGSRSYALFLYQSGGMRWDVTQGLYNRVLMGFSSGDGYFENSPLIFRPAVEKYRPDRFLTPNYGSGDSRSTGYTGRCGPTTGSSVCSGWKVSLSSPAGAGTRFPALAPGSRDFGSGSSTQVCGAGSYAASLRAGRVLYVWHLGEFREGWRMHSPWQFDEDEGRHRTGLAAGTTSPLSASSTSSGGPELVVLGTRPPRPAWTFGDPHITTLDNAKYTFNGLGYFLLVQAQDRNSSFLLEGRTAQTDSANATNFIAFAAQYNTSSLKSPITVQWFLEPNDTIRVVHNNQTVAFNTSDTEDLPVFNATGVLLIQNGSQVSANFDGTVTISVIALSNILHASSSLSEEYRNHTKGLLGVWNDNPEDDFRMPNGSTIPSNTSEETLFHYGMTSETNGIGLLGVRTDPLPSEFTPIFLSQLWNKSGAGEDLISGCNEDAQCKFDILATGNRDIGQSTNSILRTFRHVNGTLNQYPPPIHYSSKIQAYKGREQWPLRSPATLRMSYSASPTSAVAFELFENGSLHVDTNIPRRTYLEILARDVKTNLSSVLQPETVACFCSKEEQCLYNETSKEGNSSTEVTSCKCDGNSFGRLCEHSKDLCTEPCFPNVDCIPGKGCQACPPNMTGDGRHCVAVEISEFCQNHSCPVNYCYNHGHCDISGPPDCQPTCTCAPAFTGNRCFLAGNNFTPIIYKELPLRTITLSLREDENASNADVNASVANVLENLDMRAFLSNSLVELIRTSPGAPVLGKPIHHWKVVSHFKYRPRGPLIHYLNNQLISAVMEAFLLQARQERRKRSGEARKNVRFFPISRADVQDGMALNLSMLDEYFTCDGYKGYHLVYSPQDGVTCVSPCSEGYCHNGGQCKHLPDGPQCTCATFSIYTSWGERCEHLSVKLGAFFGILFGALGALLLLAILACVVFHFCGCSMNKFSYPLDSEL</sequence>
<name>MUC4_RAT</name>
<proteinExistence type="evidence at protein level"/>
<feature type="signal peptide" evidence="2">
    <location>
        <begin position="1"/>
        <end position="30"/>
    </location>
</feature>
<feature type="chain" id="PRO_0000274230" description="Mucin-4">
    <location>
        <begin position="31"/>
        <end position="2344"/>
    </location>
</feature>
<feature type="chain" id="PRO_0000274231" description="Mucin-4 alpha chain" evidence="12">
    <location>
        <begin position="31"/>
        <end position="1615"/>
    </location>
</feature>
<feature type="chain" id="PRO_0000274232" description="Mucin-4 beta chain" evidence="12">
    <location>
        <begin position="1616"/>
        <end position="2344"/>
    </location>
</feature>
<feature type="transmembrane region" description="Helical" evidence="2">
    <location>
        <begin position="2173"/>
        <end position="2193"/>
    </location>
</feature>
<feature type="transmembrane region" description="Helical" evidence="2">
    <location>
        <begin position="2301"/>
        <end position="2321"/>
    </location>
</feature>
<feature type="domain" description="NIDO" evidence="4">
    <location>
        <begin position="1332"/>
        <end position="1492"/>
    </location>
</feature>
<feature type="domain" description="VWFD" evidence="5">
    <location>
        <begin position="1609"/>
        <end position="1804"/>
    </location>
</feature>
<feature type="domain" description="EGF-like 1" evidence="3">
    <location>
        <begin position="2047"/>
        <end position="2086"/>
    </location>
</feature>
<feature type="domain" description="EGF-like 2" evidence="3">
    <location>
        <begin position="2256"/>
        <end position="2295"/>
    </location>
</feature>
<feature type="region of interest" description="Disordered" evidence="6">
    <location>
        <begin position="32"/>
        <end position="760"/>
    </location>
</feature>
<feature type="region of interest" description="Variable number of tandem repeats (VNTR)" evidence="11">
    <location>
        <begin position="81"/>
        <end position="1006"/>
    </location>
</feature>
<feature type="region of interest" description="Disordered" evidence="6">
    <location>
        <begin position="773"/>
        <end position="1036"/>
    </location>
</feature>
<feature type="region of interest" description="Disordered" evidence="6">
    <location>
        <begin position="1072"/>
        <end position="1130"/>
    </location>
</feature>
<feature type="region of interest" description="Disordered" evidence="6">
    <location>
        <begin position="1171"/>
        <end position="1197"/>
    </location>
</feature>
<feature type="region of interest" description="Disordered" evidence="6">
    <location>
        <begin position="1233"/>
        <end position="1269"/>
    </location>
</feature>
<feature type="region of interest" description="Disordered" evidence="6">
    <location>
        <begin position="1574"/>
        <end position="1597"/>
    </location>
</feature>
<feature type="compositionally biased region" description="Low complexity" evidence="6">
    <location>
        <begin position="32"/>
        <end position="46"/>
    </location>
</feature>
<feature type="compositionally biased region" description="Polar residues" evidence="6">
    <location>
        <begin position="47"/>
        <end position="100"/>
    </location>
</feature>
<feature type="compositionally biased region" description="Low complexity" evidence="6">
    <location>
        <begin position="101"/>
        <end position="116"/>
    </location>
</feature>
<feature type="compositionally biased region" description="Low complexity" evidence="6">
    <location>
        <begin position="123"/>
        <end position="137"/>
    </location>
</feature>
<feature type="compositionally biased region" description="Polar residues" evidence="6">
    <location>
        <begin position="142"/>
        <end position="225"/>
    </location>
</feature>
<feature type="compositionally biased region" description="Low complexity" evidence="6">
    <location>
        <begin position="226"/>
        <end position="273"/>
    </location>
</feature>
<feature type="compositionally biased region" description="Polar residues" evidence="6">
    <location>
        <begin position="274"/>
        <end position="305"/>
    </location>
</feature>
<feature type="compositionally biased region" description="Low complexity" evidence="6">
    <location>
        <begin position="306"/>
        <end position="322"/>
    </location>
</feature>
<feature type="compositionally biased region" description="Low complexity" evidence="6">
    <location>
        <begin position="335"/>
        <end position="349"/>
    </location>
</feature>
<feature type="compositionally biased region" description="Polar residues" evidence="6">
    <location>
        <begin position="373"/>
        <end position="436"/>
    </location>
</feature>
<feature type="compositionally biased region" description="Low complexity" evidence="6">
    <location>
        <begin position="437"/>
        <end position="446"/>
    </location>
</feature>
<feature type="compositionally biased region" description="Polar residues" evidence="6">
    <location>
        <begin position="447"/>
        <end position="468"/>
    </location>
</feature>
<feature type="compositionally biased region" description="Low complexity" evidence="6">
    <location>
        <begin position="469"/>
        <end position="492"/>
    </location>
</feature>
<feature type="compositionally biased region" description="Polar residues" evidence="6">
    <location>
        <begin position="493"/>
        <end position="509"/>
    </location>
</feature>
<feature type="compositionally biased region" description="Low complexity" evidence="6">
    <location>
        <begin position="510"/>
        <end position="546"/>
    </location>
</feature>
<feature type="compositionally biased region" description="Polar residues" evidence="6">
    <location>
        <begin position="547"/>
        <end position="580"/>
    </location>
</feature>
<feature type="compositionally biased region" description="Low complexity" evidence="6">
    <location>
        <begin position="581"/>
        <end position="594"/>
    </location>
</feature>
<feature type="compositionally biased region" description="Polar residues" evidence="6">
    <location>
        <begin position="599"/>
        <end position="682"/>
    </location>
</feature>
<feature type="compositionally biased region" description="Low complexity" evidence="6">
    <location>
        <begin position="683"/>
        <end position="698"/>
    </location>
</feature>
<feature type="compositionally biased region" description="Low complexity" evidence="6">
    <location>
        <begin position="705"/>
        <end position="719"/>
    </location>
</feature>
<feature type="compositionally biased region" description="Polar residues" evidence="6">
    <location>
        <begin position="724"/>
        <end position="760"/>
    </location>
</feature>
<feature type="compositionally biased region" description="Polar residues" evidence="6">
    <location>
        <begin position="773"/>
        <end position="807"/>
    </location>
</feature>
<feature type="compositionally biased region" description="Low complexity" evidence="6">
    <location>
        <begin position="808"/>
        <end position="828"/>
    </location>
</feature>
<feature type="compositionally biased region" description="Polar residues" evidence="6">
    <location>
        <begin position="829"/>
        <end position="868"/>
    </location>
</feature>
<feature type="compositionally biased region" description="Low complexity" evidence="6">
    <location>
        <begin position="869"/>
        <end position="915"/>
    </location>
</feature>
<feature type="compositionally biased region" description="Polar residues" evidence="6">
    <location>
        <begin position="916"/>
        <end position="994"/>
    </location>
</feature>
<feature type="compositionally biased region" description="Low complexity" evidence="6">
    <location>
        <begin position="995"/>
        <end position="1015"/>
    </location>
</feature>
<feature type="compositionally biased region" description="Polar residues" evidence="6">
    <location>
        <begin position="1016"/>
        <end position="1026"/>
    </location>
</feature>
<feature type="compositionally biased region" description="Low complexity" evidence="6">
    <location>
        <begin position="1027"/>
        <end position="1036"/>
    </location>
</feature>
<feature type="compositionally biased region" description="Polar residues" evidence="6">
    <location>
        <begin position="1072"/>
        <end position="1083"/>
    </location>
</feature>
<feature type="compositionally biased region" description="Low complexity" evidence="6">
    <location>
        <begin position="1084"/>
        <end position="1096"/>
    </location>
</feature>
<feature type="compositionally biased region" description="Polar residues" evidence="6">
    <location>
        <begin position="1097"/>
        <end position="1116"/>
    </location>
</feature>
<feature type="compositionally biased region" description="Low complexity" evidence="6">
    <location>
        <begin position="1118"/>
        <end position="1130"/>
    </location>
</feature>
<feature type="compositionally biased region" description="Low complexity" evidence="6">
    <location>
        <begin position="1175"/>
        <end position="1188"/>
    </location>
</feature>
<feature type="compositionally biased region" description="Low complexity" evidence="6">
    <location>
        <begin position="1233"/>
        <end position="1267"/>
    </location>
</feature>
<feature type="compositionally biased region" description="Low complexity" evidence="6">
    <location>
        <begin position="1580"/>
        <end position="1597"/>
    </location>
</feature>
<feature type="site" description="Cleavage" evidence="12">
    <location>
        <begin position="1616"/>
        <end position="1617"/>
    </location>
</feature>
<feature type="glycosylation site" description="O-linked (GalNAc...) threonine" evidence="2">
    <location>
        <position position="133"/>
    </location>
</feature>
<feature type="glycosylation site" description="O-linked (GalNAc...) threonine" evidence="2">
    <location>
        <position position="391"/>
    </location>
</feature>
<feature type="glycosylation site" description="O-linked (GalNAc...) threonine" evidence="2">
    <location>
        <position position="392"/>
    </location>
</feature>
<feature type="glycosylation site" description="O-linked (GalNAc...) threonine" evidence="2">
    <location>
        <position position="470"/>
    </location>
</feature>
<feature type="glycosylation site" description="O-linked (GalNAc...) serine" evidence="2">
    <location>
        <position position="479"/>
    </location>
</feature>
<feature type="glycosylation site" description="N-linked (GlcNAc...) asparagine" evidence="2">
    <location>
        <position position="1644"/>
    </location>
</feature>
<feature type="glycosylation site" description="N-linked (GlcNAc...) asparagine" evidence="2">
    <location>
        <position position="1660"/>
    </location>
</feature>
<feature type="glycosylation site" description="N-linked (GlcNAc...) asparagine" evidence="2">
    <location>
        <position position="1672"/>
    </location>
</feature>
<feature type="glycosylation site" description="N-linked (GlcNAc...) asparagine" evidence="2">
    <location>
        <position position="1689"/>
    </location>
</feature>
<feature type="glycosylation site" description="N-linked (GlcNAc...) asparagine" evidence="2">
    <location>
        <position position="1698"/>
    </location>
</feature>
<feature type="glycosylation site" description="N-linked (GlcNAc...) asparagine" evidence="2">
    <location>
        <position position="1704"/>
    </location>
</feature>
<feature type="glycosylation site" description="N-linked (GlcNAc...) asparagine" evidence="2">
    <location>
        <position position="1715"/>
    </location>
</feature>
<feature type="glycosylation site" description="N-linked (GlcNAc...) asparagine" evidence="2">
    <location>
        <position position="1724"/>
    </location>
</feature>
<feature type="glycosylation site" description="N-linked (GlcNAc...) asparagine" evidence="2">
    <location>
        <position position="1759"/>
    </location>
</feature>
<feature type="glycosylation site" description="N-linked (GlcNAc...) asparagine" evidence="2">
    <location>
        <position position="1780"/>
    </location>
</feature>
<feature type="glycosylation site" description="N-linked (GlcNAc...) asparagine" evidence="2">
    <location>
        <position position="1787"/>
    </location>
</feature>
<feature type="glycosylation site" description="N-linked (GlcNAc...) asparagine" evidence="2">
    <location>
        <position position="1829"/>
    </location>
</feature>
<feature type="glycosylation site" description="N-linked (GlcNAc...) asparagine" evidence="2">
    <location>
        <position position="1874"/>
    </location>
</feature>
<feature type="glycosylation site" description="N-linked (GlcNAc...) asparagine" evidence="2">
    <location>
        <position position="1926"/>
    </location>
</feature>
<feature type="glycosylation site" description="N-linked (GlcNAc...) asparagine" evidence="2">
    <location>
        <position position="1951"/>
    </location>
</feature>
<feature type="glycosylation site" description="N-linked (GlcNAc...) asparagine" evidence="2">
    <location>
        <position position="1974"/>
    </location>
</feature>
<feature type="glycosylation site" description="N-linked (GlcNAc...) asparagine" evidence="2">
    <location>
        <position position="1981"/>
    </location>
</feature>
<feature type="glycosylation site" description="N-linked (GlcNAc...) asparagine" evidence="2">
    <location>
        <position position="2029"/>
    </location>
</feature>
<feature type="glycosylation site" description="N-linked (GlcNAc...) asparagine" evidence="2">
    <location>
        <position position="2048"/>
    </location>
</feature>
<feature type="glycosylation site" description="N-linked (GlcNAc...) asparagine" evidence="2">
    <location>
        <position position="2114"/>
    </location>
</feature>
<feature type="glycosylation site" description="N-linked (GlcNAc...) asparagine" evidence="2">
    <location>
        <position position="2121"/>
    </location>
</feature>
<feature type="glycosylation site" description="N-linked (GlcNAc...) asparagine" evidence="2">
    <location>
        <position position="2227"/>
    </location>
</feature>
<feature type="disulfide bond" evidence="3">
    <location>
        <begin position="2051"/>
        <end position="2062"/>
    </location>
</feature>
<feature type="disulfide bond" evidence="3">
    <location>
        <begin position="2056"/>
        <end position="2074"/>
    </location>
</feature>
<feature type="disulfide bond" evidence="3">
    <location>
        <begin position="2076"/>
        <end position="2085"/>
    </location>
</feature>
<feature type="disulfide bond" evidence="3">
    <location>
        <begin position="2259"/>
        <end position="2270"/>
    </location>
</feature>
<feature type="disulfide bond" evidence="3">
    <location>
        <begin position="2264"/>
        <end position="2279"/>
    </location>
</feature>
<feature type="disulfide bond" evidence="3">
    <location>
        <begin position="2281"/>
        <end position="2294"/>
    </location>
</feature>
<feature type="sequence conflict" description="In Ref. 1; AAA85519/AAA85521." evidence="11" ref="1">
    <original>I</original>
    <variation>L</variation>
    <location>
        <position position="81"/>
    </location>
</feature>
<feature type="sequence conflict" description="In Ref. 1; AAA85519/AAA85521." evidence="11" ref="1">
    <original>S</original>
    <variation>G</variation>
    <location>
        <position position="92"/>
    </location>
</feature>
<feature type="sequence conflict" description="In Ref. 1; AAA85519/AAA85521." evidence="11" ref="1">
    <original>GT</original>
    <variation>RN</variation>
    <location>
        <begin position="103"/>
        <end position="104"/>
    </location>
</feature>
<feature type="sequence conflict" description="In Ref. 1; AAA85521." evidence="11" ref="1">
    <original>T</original>
    <variation>A</variation>
    <location>
        <position position="110"/>
    </location>
</feature>
<feature type="sequence conflict" description="In Ref. 1; AAA85521." evidence="11" ref="1">
    <original>QT</original>
    <variation>RA</variation>
    <location>
        <begin position="126"/>
        <end position="127"/>
    </location>
</feature>
<feature type="sequence conflict" description="In Ref. 1; AAA85519." evidence="11" ref="1">
    <original>T</original>
    <variation>A</variation>
    <location>
        <position position="128"/>
    </location>
</feature>
<feature type="sequence conflict" description="In Ref. 1; AAA85521." evidence="11" ref="1">
    <original>T</original>
    <variation>A</variation>
    <location>
        <position position="133"/>
    </location>
</feature>
<feature type="sequence conflict" description="In Ref. 1; AAA85519." evidence="11" ref="1">
    <original>RES</original>
    <variation>ER</variation>
    <location>
        <begin position="141"/>
        <end position="143"/>
    </location>
</feature>
<feature type="sequence conflict" description="In Ref. 1; AAA85519." evidence="11" ref="1">
    <location>
        <begin position="150"/>
        <end position="485"/>
    </location>
</feature>
<feature type="sequence conflict" description="In Ref. 1; AAA85521." evidence="11" ref="1">
    <original>T</original>
    <variation>M</variation>
    <location>
        <position position="156"/>
    </location>
</feature>
<feature type="sequence conflict" description="In Ref. 1; AAA85521." evidence="11" ref="1">
    <original>M</original>
    <variation>T</variation>
    <location>
        <position position="170"/>
    </location>
</feature>
<feature type="sequence conflict" description="In Ref. 1; AAA85521." evidence="11" ref="1">
    <original>T</original>
    <variation>V</variation>
    <location>
        <position position="174"/>
    </location>
</feature>
<feature type="sequence conflict" description="In Ref. 1; AAA85519." evidence="11" ref="1">
    <original>G</original>
    <variation>V</variation>
    <location>
        <position position="490"/>
    </location>
</feature>
<feature type="sequence conflict" description="In Ref. 1; AAA85519." evidence="11" ref="1">
    <original>T</original>
    <variation>K</variation>
    <location>
        <position position="498"/>
    </location>
</feature>
<feature type="sequence conflict" description="In Ref. 1; AAA85519." evidence="11" ref="1">
    <original>VT</original>
    <variation>IS</variation>
    <location>
        <begin position="501"/>
        <end position="502"/>
    </location>
</feature>
<feature type="sequence conflict" description="In Ref. 1; AAA85519." evidence="11" ref="1">
    <original>D</original>
    <variation>G</variation>
    <location>
        <position position="505"/>
    </location>
</feature>
<comment type="function">
    <text evidence="1">Membrane-bound mucin, a family of highly glycosylated proteins that constitute the major component of the mucus, the slimy and viscous secretion covering epithelial surfaces. These glycoproteins play important roles in the protection of the epithelium and are implicated in epithelial renewal and differentiation. Regulates cellular behavior through both anti-adhesive effects on cell-cell and cell-extracellular matrix interactions and its ability to act as an intramembrane ligand for ERBB2. Plays an important role in proliferation and differentiation of epithelial cells by inducing specific phosphorylation of ERBB2. In polarized epithelial cells, segregates ERBB2 and other ERBB receptors and prevents ERBB2 from acting as a coreceptor. The interaction with ERBB2 leads to enhanced expression of CDKN1B. The formation of a MUC4-ERBB2-ERBB3-NRG1 complex leads to down-regulation of CDKN1B, resulting in repression of apoptosis and stimulation of proliferation. Its ability to promote tumor growth may be mainly due to repression of apoptosis as opposed to proliferation.</text>
</comment>
<comment type="subunit">
    <text evidence="7 9 10">A heterodimeric complex, composed of a mucin-4 alpha chain and a cysteine-rich transmembrane mucin-4 beta chain (PubMed:7440586). Mucin-4 beta chain interacts with ERBB2 via the EGF-like domain 1. In nonpolarized cells, associates with ERBB2 and ERBB3 (PubMed:12386815, PubMed:16624867).</text>
</comment>
<comment type="subcellular location">
    <molecule>Mucin-4 beta chain</molecule>
    <subcellularLocation>
        <location evidence="12">Cell membrane</location>
        <topology evidence="12">Multi-pass membrane protein</topology>
    </subcellularLocation>
</comment>
<comment type="subcellular location">
    <molecule>Mucin-4 alpha chain</molecule>
    <subcellularLocation>
        <location evidence="12">Secreted</location>
    </subcellularLocation>
    <text evidence="12">Secreted by proteolytic processing.</text>
</comment>
<comment type="tissue specificity">
    <text>Expression is developmentally regulated in the mammary gland, dramatically increases in the lactating gland compared with the virgin mammary gland, while decreasing again during mammary gland involution. Expressed in 13762 ascites cells. Overexpressed in some aggressive mammary tumors. Overexpression seems to block cell-cell and cell-matrix interactions to protect tumor cells from immune surveillance, and to promote metastasis.</text>
</comment>
<comment type="domain">
    <molecule>Mucin-4 alpha chain</molecule>
    <text evidence="1">Essentially composed of an array of serine- and threonine-rich tandem repeats which is highly polymorphic, the variable number of tandem repeats (VNTR) region.</text>
</comment>
<comment type="PTM">
    <text evidence="12">Proteolytically cleaved into 2 subunits, mucin-4 alpha chain and mucin-4 beta chain.</text>
</comment>
<comment type="PTM">
    <text evidence="8">Mucin-4 alpha subunit is highly O-glycosylated.</text>
</comment>
<comment type="PTM">
    <text evidence="8">Mucin-4 beta subunit is predominantly N-glycosylated.</text>
</comment>
<comment type="polymorphism">
    <text evidence="11">The variable number of tandem repeats (VNTR) region, an array of serine- and threonine-rich tandem repeats, is encoded by a single exon (exon 2) which is highly polymorphic.</text>
</comment>